<organism>
    <name type="scientific">Mycobacterium bovis (strain BCG / Pasteur 1173P2)</name>
    <dbReference type="NCBI Taxonomy" id="410289"/>
    <lineage>
        <taxon>Bacteria</taxon>
        <taxon>Bacillati</taxon>
        <taxon>Actinomycetota</taxon>
        <taxon>Actinomycetes</taxon>
        <taxon>Mycobacteriales</taxon>
        <taxon>Mycobacteriaceae</taxon>
        <taxon>Mycobacterium</taxon>
        <taxon>Mycobacterium tuberculosis complex</taxon>
    </lineage>
</organism>
<gene>
    <name evidence="1" type="primary">nuoH</name>
    <name type="ordered locus">BCG_3175</name>
</gene>
<proteinExistence type="inferred from homology"/>
<evidence type="ECO:0000255" key="1">
    <source>
        <dbReference type="HAMAP-Rule" id="MF_01350"/>
    </source>
</evidence>
<evidence type="ECO:0000256" key="2">
    <source>
        <dbReference type="SAM" id="MobiDB-lite"/>
    </source>
</evidence>
<feature type="chain" id="PRO_0000298827" description="NADH-quinone oxidoreductase subunit H">
    <location>
        <begin position="1"/>
        <end position="410"/>
    </location>
</feature>
<feature type="transmembrane region" description="Helical" evidence="1">
    <location>
        <begin position="11"/>
        <end position="31"/>
    </location>
</feature>
<feature type="transmembrane region" description="Helical" evidence="1">
    <location>
        <begin position="79"/>
        <end position="99"/>
    </location>
</feature>
<feature type="transmembrane region" description="Helical" evidence="1">
    <location>
        <begin position="119"/>
        <end position="139"/>
    </location>
</feature>
<feature type="transmembrane region" description="Helical" evidence="1">
    <location>
        <begin position="160"/>
        <end position="180"/>
    </location>
</feature>
<feature type="transmembrane region" description="Helical" evidence="1">
    <location>
        <begin position="192"/>
        <end position="212"/>
    </location>
</feature>
<feature type="transmembrane region" description="Helical" evidence="1">
    <location>
        <begin position="257"/>
        <end position="277"/>
    </location>
</feature>
<feature type="transmembrane region" description="Helical" evidence="1">
    <location>
        <begin position="283"/>
        <end position="303"/>
    </location>
</feature>
<feature type="transmembrane region" description="Helical" evidence="1">
    <location>
        <begin position="317"/>
        <end position="337"/>
    </location>
</feature>
<feature type="transmembrane region" description="Helical" evidence="1">
    <location>
        <begin position="347"/>
        <end position="367"/>
    </location>
</feature>
<feature type="region of interest" description="Disordered" evidence="2">
    <location>
        <begin position="376"/>
        <end position="410"/>
    </location>
</feature>
<name>NUOH_MYCBP</name>
<accession>A1KNE8</accession>
<reference key="1">
    <citation type="journal article" date="2007" name="Proc. Natl. Acad. Sci. U.S.A.">
        <title>Genome plasticity of BCG and impact on vaccine efficacy.</title>
        <authorList>
            <person name="Brosch R."/>
            <person name="Gordon S.V."/>
            <person name="Garnier T."/>
            <person name="Eiglmeier K."/>
            <person name="Frigui W."/>
            <person name="Valenti P."/>
            <person name="Dos Santos S."/>
            <person name="Duthoy S."/>
            <person name="Lacroix C."/>
            <person name="Garcia-Pelayo C."/>
            <person name="Inwald J.K."/>
            <person name="Golby P."/>
            <person name="Garcia J.N."/>
            <person name="Hewinson R.G."/>
            <person name="Behr M.A."/>
            <person name="Quail M.A."/>
            <person name="Churcher C."/>
            <person name="Barrell B.G."/>
            <person name="Parkhill J."/>
            <person name="Cole S.T."/>
        </authorList>
    </citation>
    <scope>NUCLEOTIDE SEQUENCE [LARGE SCALE GENOMIC DNA]</scope>
    <source>
        <strain>BCG / Pasteur 1173P2</strain>
    </source>
</reference>
<keyword id="KW-1003">Cell membrane</keyword>
<keyword id="KW-0472">Membrane</keyword>
<keyword id="KW-0520">NAD</keyword>
<keyword id="KW-0874">Quinone</keyword>
<keyword id="KW-1278">Translocase</keyword>
<keyword id="KW-0812">Transmembrane</keyword>
<keyword id="KW-1133">Transmembrane helix</keyword>
<dbReference type="EC" id="7.1.1.-" evidence="1"/>
<dbReference type="EMBL" id="AM408590">
    <property type="protein sequence ID" value="CAL73164.1"/>
    <property type="molecule type" value="Genomic_DNA"/>
</dbReference>
<dbReference type="RefSeq" id="WP_003416445.1">
    <property type="nucleotide sequence ID" value="NC_008769.1"/>
</dbReference>
<dbReference type="SMR" id="A1KNE8"/>
<dbReference type="GeneID" id="45427139"/>
<dbReference type="KEGG" id="mbb:BCG_3175"/>
<dbReference type="HOGENOM" id="CLU_015134_0_0_11"/>
<dbReference type="Proteomes" id="UP000001472">
    <property type="component" value="Chromosome"/>
</dbReference>
<dbReference type="GO" id="GO:0005886">
    <property type="term" value="C:plasma membrane"/>
    <property type="evidence" value="ECO:0007669"/>
    <property type="project" value="UniProtKB-SubCell"/>
</dbReference>
<dbReference type="GO" id="GO:0003954">
    <property type="term" value="F:NADH dehydrogenase activity"/>
    <property type="evidence" value="ECO:0007669"/>
    <property type="project" value="TreeGrafter"/>
</dbReference>
<dbReference type="GO" id="GO:0016655">
    <property type="term" value="F:oxidoreductase activity, acting on NAD(P)H, quinone or similar compound as acceptor"/>
    <property type="evidence" value="ECO:0007669"/>
    <property type="project" value="UniProtKB-UniRule"/>
</dbReference>
<dbReference type="GO" id="GO:0048038">
    <property type="term" value="F:quinone binding"/>
    <property type="evidence" value="ECO:0007669"/>
    <property type="project" value="UniProtKB-KW"/>
</dbReference>
<dbReference type="GO" id="GO:0009060">
    <property type="term" value="P:aerobic respiration"/>
    <property type="evidence" value="ECO:0007669"/>
    <property type="project" value="TreeGrafter"/>
</dbReference>
<dbReference type="HAMAP" id="MF_01350">
    <property type="entry name" value="NDH1_NuoH"/>
    <property type="match status" value="1"/>
</dbReference>
<dbReference type="InterPro" id="IPR001694">
    <property type="entry name" value="NADH_UbQ_OxRdtase_su1/FPO"/>
</dbReference>
<dbReference type="InterPro" id="IPR018086">
    <property type="entry name" value="NADH_UbQ_OxRdtase_su1_CS"/>
</dbReference>
<dbReference type="NCBIfam" id="NF004741">
    <property type="entry name" value="PRK06076.1-2"/>
    <property type="match status" value="1"/>
</dbReference>
<dbReference type="NCBIfam" id="NF004743">
    <property type="entry name" value="PRK06076.1-4"/>
    <property type="match status" value="1"/>
</dbReference>
<dbReference type="PANTHER" id="PTHR11432">
    <property type="entry name" value="NADH DEHYDROGENASE SUBUNIT 1"/>
    <property type="match status" value="1"/>
</dbReference>
<dbReference type="PANTHER" id="PTHR11432:SF3">
    <property type="entry name" value="NADH-UBIQUINONE OXIDOREDUCTASE CHAIN 1"/>
    <property type="match status" value="1"/>
</dbReference>
<dbReference type="Pfam" id="PF00146">
    <property type="entry name" value="NADHdh"/>
    <property type="match status" value="1"/>
</dbReference>
<dbReference type="PROSITE" id="PS00667">
    <property type="entry name" value="COMPLEX1_ND1_1"/>
    <property type="match status" value="1"/>
</dbReference>
<dbReference type="PROSITE" id="PS00668">
    <property type="entry name" value="COMPLEX1_ND1_2"/>
    <property type="match status" value="1"/>
</dbReference>
<comment type="function">
    <text evidence="1">NDH-1 shuttles electrons from NADH, via FMN and iron-sulfur (Fe-S) centers, to quinones in the respiratory chain. The immediate electron acceptor for the enzyme in this species is believed to be menaquinone. Couples the redox reaction to proton translocation (for every two electrons transferred, four hydrogen ions are translocated across the cytoplasmic membrane), and thus conserves the redox energy in a proton gradient. This subunit may bind ubiquinone (By similarity).</text>
</comment>
<comment type="catalytic activity">
    <reaction evidence="1">
        <text>a quinone + NADH + 5 H(+)(in) = a quinol + NAD(+) + 4 H(+)(out)</text>
        <dbReference type="Rhea" id="RHEA:57888"/>
        <dbReference type="ChEBI" id="CHEBI:15378"/>
        <dbReference type="ChEBI" id="CHEBI:24646"/>
        <dbReference type="ChEBI" id="CHEBI:57540"/>
        <dbReference type="ChEBI" id="CHEBI:57945"/>
        <dbReference type="ChEBI" id="CHEBI:132124"/>
    </reaction>
</comment>
<comment type="subunit">
    <text evidence="1">NDH-1 is composed of 14 different subunits. Subunits NuoA, H, J, K, L, M, N constitute the membrane sector of the complex.</text>
</comment>
<comment type="subcellular location">
    <subcellularLocation>
        <location evidence="1">Cell membrane</location>
        <topology evidence="1">Multi-pass membrane protein</topology>
    </subcellularLocation>
</comment>
<comment type="similarity">
    <text evidence="1">Belongs to the complex I subunit 1 family.</text>
</comment>
<sequence>MTTFGHDTWWLVAAKAIAVFVFLMLTVLVAILAERKLLGRMQLRPGPNRVGPKGALQSLADGIKLALKESITPGGIDRFVYFVAPIISVIPAFTAFAFIPFGPEVSVFGHRTPLQITDLPVAVLFILGLSAIGVYGIVLGGWASGSTYPLLGGVRSTAQVISYEVAMGLSFATVFLMAGTMSTSQIVAAQDGVWYAFLLLPSFVIYLISMVGETNRAPFDLPEAEGELVAGFHTEYSSLKFAMFMLAEYVNMTTVSALAATLFFGGWHAPWPLNMWASANTGWWPLIWFTAKVWGFLFIYFWLRATLPRLRYDQFMALGWKLLIPVSLVWVMVAAIIRSLRNQGYQYWTPTLVFSSIVVAAAMVLLLRKPLSAPGARASARQRGDEGTSPEPAFPTPPLLAGATKENAGG</sequence>
<protein>
    <recommendedName>
        <fullName evidence="1">NADH-quinone oxidoreductase subunit H</fullName>
        <ecNumber evidence="1">7.1.1.-</ecNumber>
    </recommendedName>
    <alternativeName>
        <fullName evidence="1">NADH dehydrogenase I subunit H</fullName>
    </alternativeName>
    <alternativeName>
        <fullName evidence="1">NDH-1 subunit H</fullName>
    </alternativeName>
</protein>